<sequence length="126" mass="13645">MAILGLGTDIAEIERIEKALGRSGEPFAQRILSEDEMAKFSQLKQQGRYLAKRFAAKEAASKALGTGIAQGVTFHDFTVSNDELGKPVLMLSGVAQKMAQTMGVNHVHLSISDERHYAVATVILES</sequence>
<name>ACPS_VIBPA</name>
<evidence type="ECO:0000255" key="1">
    <source>
        <dbReference type="HAMAP-Rule" id="MF_00101"/>
    </source>
</evidence>
<proteinExistence type="inferred from homology"/>
<feature type="chain" id="PRO_0000175727" description="Holo-[acyl-carrier-protein] synthase">
    <location>
        <begin position="1"/>
        <end position="126"/>
    </location>
</feature>
<feature type="binding site" evidence="1">
    <location>
        <position position="9"/>
    </location>
    <ligand>
        <name>Mg(2+)</name>
        <dbReference type="ChEBI" id="CHEBI:18420"/>
    </ligand>
</feature>
<feature type="binding site" evidence="1">
    <location>
        <position position="58"/>
    </location>
    <ligand>
        <name>Mg(2+)</name>
        <dbReference type="ChEBI" id="CHEBI:18420"/>
    </ligand>
</feature>
<dbReference type="EC" id="2.7.8.7" evidence="1"/>
<dbReference type="EMBL" id="BA000031">
    <property type="protein sequence ID" value="BAC60831.1"/>
    <property type="molecule type" value="Genomic_DNA"/>
</dbReference>
<dbReference type="RefSeq" id="NP_798947.1">
    <property type="nucleotide sequence ID" value="NC_004603.1"/>
</dbReference>
<dbReference type="RefSeq" id="WP_005460687.1">
    <property type="nucleotide sequence ID" value="NC_004603.1"/>
</dbReference>
<dbReference type="SMR" id="Q87LP3"/>
<dbReference type="GeneID" id="1190092"/>
<dbReference type="KEGG" id="vpa:VP2568"/>
<dbReference type="PATRIC" id="fig|223926.6.peg.2466"/>
<dbReference type="eggNOG" id="COG0736">
    <property type="taxonomic scope" value="Bacteria"/>
</dbReference>
<dbReference type="HOGENOM" id="CLU_089696_3_1_6"/>
<dbReference type="Proteomes" id="UP000002493">
    <property type="component" value="Chromosome 1"/>
</dbReference>
<dbReference type="GO" id="GO:0005737">
    <property type="term" value="C:cytoplasm"/>
    <property type="evidence" value="ECO:0007669"/>
    <property type="project" value="UniProtKB-SubCell"/>
</dbReference>
<dbReference type="GO" id="GO:0008897">
    <property type="term" value="F:holo-[acyl-carrier-protein] synthase activity"/>
    <property type="evidence" value="ECO:0007669"/>
    <property type="project" value="UniProtKB-UniRule"/>
</dbReference>
<dbReference type="GO" id="GO:0000287">
    <property type="term" value="F:magnesium ion binding"/>
    <property type="evidence" value="ECO:0007669"/>
    <property type="project" value="UniProtKB-UniRule"/>
</dbReference>
<dbReference type="GO" id="GO:0006633">
    <property type="term" value="P:fatty acid biosynthetic process"/>
    <property type="evidence" value="ECO:0007669"/>
    <property type="project" value="UniProtKB-UniRule"/>
</dbReference>
<dbReference type="FunFam" id="3.90.470.20:FF:000001">
    <property type="entry name" value="Holo-[acyl-carrier-protein] synthase"/>
    <property type="match status" value="1"/>
</dbReference>
<dbReference type="Gene3D" id="3.90.470.20">
    <property type="entry name" value="4'-phosphopantetheinyl transferase domain"/>
    <property type="match status" value="1"/>
</dbReference>
<dbReference type="HAMAP" id="MF_00101">
    <property type="entry name" value="AcpS"/>
    <property type="match status" value="1"/>
</dbReference>
<dbReference type="InterPro" id="IPR008278">
    <property type="entry name" value="4-PPantetheinyl_Trfase_dom"/>
</dbReference>
<dbReference type="InterPro" id="IPR037143">
    <property type="entry name" value="4-PPantetheinyl_Trfase_dom_sf"/>
</dbReference>
<dbReference type="InterPro" id="IPR002582">
    <property type="entry name" value="ACPS"/>
</dbReference>
<dbReference type="InterPro" id="IPR004568">
    <property type="entry name" value="Ppantetheine-prot_Trfase_dom"/>
</dbReference>
<dbReference type="NCBIfam" id="TIGR00516">
    <property type="entry name" value="acpS"/>
    <property type="match status" value="1"/>
</dbReference>
<dbReference type="NCBIfam" id="TIGR00556">
    <property type="entry name" value="pantethn_trn"/>
    <property type="match status" value="1"/>
</dbReference>
<dbReference type="Pfam" id="PF01648">
    <property type="entry name" value="ACPS"/>
    <property type="match status" value="1"/>
</dbReference>
<dbReference type="SUPFAM" id="SSF56214">
    <property type="entry name" value="4'-phosphopantetheinyl transferase"/>
    <property type="match status" value="1"/>
</dbReference>
<comment type="function">
    <text evidence="1">Transfers the 4'-phosphopantetheine moiety from coenzyme A to a Ser of acyl-carrier-protein.</text>
</comment>
<comment type="catalytic activity">
    <reaction evidence="1">
        <text>apo-[ACP] + CoA = holo-[ACP] + adenosine 3',5'-bisphosphate + H(+)</text>
        <dbReference type="Rhea" id="RHEA:12068"/>
        <dbReference type="Rhea" id="RHEA-COMP:9685"/>
        <dbReference type="Rhea" id="RHEA-COMP:9690"/>
        <dbReference type="ChEBI" id="CHEBI:15378"/>
        <dbReference type="ChEBI" id="CHEBI:29999"/>
        <dbReference type="ChEBI" id="CHEBI:57287"/>
        <dbReference type="ChEBI" id="CHEBI:58343"/>
        <dbReference type="ChEBI" id="CHEBI:64479"/>
        <dbReference type="EC" id="2.7.8.7"/>
    </reaction>
</comment>
<comment type="cofactor">
    <cofactor evidence="1">
        <name>Mg(2+)</name>
        <dbReference type="ChEBI" id="CHEBI:18420"/>
    </cofactor>
</comment>
<comment type="subcellular location">
    <subcellularLocation>
        <location evidence="1">Cytoplasm</location>
    </subcellularLocation>
</comment>
<comment type="similarity">
    <text evidence="1">Belongs to the P-Pant transferase superfamily. AcpS family.</text>
</comment>
<keyword id="KW-0963">Cytoplasm</keyword>
<keyword id="KW-0275">Fatty acid biosynthesis</keyword>
<keyword id="KW-0276">Fatty acid metabolism</keyword>
<keyword id="KW-0444">Lipid biosynthesis</keyword>
<keyword id="KW-0443">Lipid metabolism</keyword>
<keyword id="KW-0460">Magnesium</keyword>
<keyword id="KW-0479">Metal-binding</keyword>
<keyword id="KW-0808">Transferase</keyword>
<gene>
    <name evidence="1" type="primary">acpS</name>
    <name type="ordered locus">VP2568</name>
</gene>
<protein>
    <recommendedName>
        <fullName evidence="1">Holo-[acyl-carrier-protein] synthase</fullName>
        <shortName evidence="1">Holo-ACP synthase</shortName>
        <ecNumber evidence="1">2.7.8.7</ecNumber>
    </recommendedName>
    <alternativeName>
        <fullName evidence="1">4'-phosphopantetheinyl transferase AcpS</fullName>
    </alternativeName>
</protein>
<reference key="1">
    <citation type="journal article" date="2003" name="Lancet">
        <title>Genome sequence of Vibrio parahaemolyticus: a pathogenic mechanism distinct from that of V. cholerae.</title>
        <authorList>
            <person name="Makino K."/>
            <person name="Oshima K."/>
            <person name="Kurokawa K."/>
            <person name="Yokoyama K."/>
            <person name="Uda T."/>
            <person name="Tagomori K."/>
            <person name="Iijima Y."/>
            <person name="Najima M."/>
            <person name="Nakano M."/>
            <person name="Yamashita A."/>
            <person name="Kubota Y."/>
            <person name="Kimura S."/>
            <person name="Yasunaga T."/>
            <person name="Honda T."/>
            <person name="Shinagawa H."/>
            <person name="Hattori M."/>
            <person name="Iida T."/>
        </authorList>
    </citation>
    <scope>NUCLEOTIDE SEQUENCE [LARGE SCALE GENOMIC DNA]</scope>
    <source>
        <strain>RIMD 2210633</strain>
    </source>
</reference>
<organism>
    <name type="scientific">Vibrio parahaemolyticus serotype O3:K6 (strain RIMD 2210633)</name>
    <dbReference type="NCBI Taxonomy" id="223926"/>
    <lineage>
        <taxon>Bacteria</taxon>
        <taxon>Pseudomonadati</taxon>
        <taxon>Pseudomonadota</taxon>
        <taxon>Gammaproteobacteria</taxon>
        <taxon>Vibrionales</taxon>
        <taxon>Vibrionaceae</taxon>
        <taxon>Vibrio</taxon>
    </lineage>
</organism>
<accession>Q87LP3</accession>